<dbReference type="EMBL" id="AL021635">
    <property type="protein sequence ID" value="CAA16566.1"/>
    <property type="molecule type" value="Genomic_DNA"/>
</dbReference>
<dbReference type="EMBL" id="AL161558">
    <property type="protein sequence ID" value="CAB79236.1"/>
    <property type="molecule type" value="Genomic_DNA"/>
</dbReference>
<dbReference type="EMBL" id="CP002687">
    <property type="protein sequence ID" value="AEE84660.1"/>
    <property type="molecule type" value="Genomic_DNA"/>
</dbReference>
<dbReference type="EMBL" id="AK229321">
    <property type="protein sequence ID" value="BAF01184.1"/>
    <property type="molecule type" value="mRNA"/>
</dbReference>
<dbReference type="EMBL" id="AK230322">
    <property type="protein sequence ID" value="BAF02122.1"/>
    <property type="molecule type" value="mRNA"/>
</dbReference>
<dbReference type="EMBL" id="AB493693">
    <property type="protein sequence ID" value="BAH30531.1"/>
    <property type="molecule type" value="mRNA"/>
</dbReference>
<dbReference type="EMBL" id="BR000360">
    <property type="protein sequence ID" value="FAA00295.1"/>
    <property type="molecule type" value="mRNA"/>
</dbReference>
<dbReference type="PIR" id="T04576">
    <property type="entry name" value="T04576"/>
</dbReference>
<dbReference type="RefSeq" id="NP_194012.1">
    <property type="nucleotide sequence ID" value="NM_118410.3"/>
</dbReference>
<dbReference type="SMR" id="O49662"/>
<dbReference type="FunCoup" id="O49662">
    <property type="interactions" value="210"/>
</dbReference>
<dbReference type="STRING" id="3702.O49662"/>
<dbReference type="iPTMnet" id="O49662"/>
<dbReference type="PaxDb" id="3702-AT4G22810.1"/>
<dbReference type="ProteomicsDB" id="244978"/>
<dbReference type="EnsemblPlants" id="AT4G22810.1">
    <property type="protein sequence ID" value="AT4G22810.1"/>
    <property type="gene ID" value="AT4G22810"/>
</dbReference>
<dbReference type="GeneID" id="828380"/>
<dbReference type="Gramene" id="AT4G22810.1">
    <property type="protein sequence ID" value="AT4G22810.1"/>
    <property type="gene ID" value="AT4G22810"/>
</dbReference>
<dbReference type="KEGG" id="ath:AT4G22810"/>
<dbReference type="Araport" id="AT4G22810"/>
<dbReference type="TAIR" id="AT4G22810">
    <property type="gene designation" value="AHL24"/>
</dbReference>
<dbReference type="eggNOG" id="ENOG502QRBV">
    <property type="taxonomic scope" value="Eukaryota"/>
</dbReference>
<dbReference type="HOGENOM" id="CLU_039808_2_1_1"/>
<dbReference type="InParanoid" id="O49662"/>
<dbReference type="OMA" id="HQMTRRP"/>
<dbReference type="OrthoDB" id="780035at2759"/>
<dbReference type="PhylomeDB" id="O49662"/>
<dbReference type="PRO" id="PR:O49662"/>
<dbReference type="Proteomes" id="UP000006548">
    <property type="component" value="Chromosome 4"/>
</dbReference>
<dbReference type="ExpressionAtlas" id="O49662">
    <property type="expression patterns" value="baseline and differential"/>
</dbReference>
<dbReference type="GO" id="GO:0005634">
    <property type="term" value="C:nucleus"/>
    <property type="evidence" value="ECO:0007669"/>
    <property type="project" value="UniProtKB-SubCell"/>
</dbReference>
<dbReference type="GO" id="GO:0003680">
    <property type="term" value="F:minor groove of adenine-thymine-rich DNA binding"/>
    <property type="evidence" value="ECO:0007669"/>
    <property type="project" value="InterPro"/>
</dbReference>
<dbReference type="CDD" id="cd11378">
    <property type="entry name" value="DUF296"/>
    <property type="match status" value="1"/>
</dbReference>
<dbReference type="FunFam" id="3.30.1330.80:FF:000001">
    <property type="entry name" value="AT-hook motif nuclear-localized protein"/>
    <property type="match status" value="1"/>
</dbReference>
<dbReference type="Gene3D" id="3.30.1330.80">
    <property type="entry name" value="Hypothetical protein, similar to alpha- acetolactate decarboxylase, domain 2"/>
    <property type="match status" value="1"/>
</dbReference>
<dbReference type="InterPro" id="IPR014476">
    <property type="entry name" value="AHL15-29"/>
</dbReference>
<dbReference type="InterPro" id="IPR005175">
    <property type="entry name" value="PPC_dom"/>
</dbReference>
<dbReference type="PANTHER" id="PTHR31100">
    <property type="entry name" value="AT-HOOK MOTIF NUCLEAR-LOCALIZED PROTEIN 15"/>
    <property type="match status" value="1"/>
</dbReference>
<dbReference type="PANTHER" id="PTHR31100:SF15">
    <property type="entry name" value="AT-HOOK MOTIF NUCLEAR-LOCALIZED PROTEIN 24-RELATED"/>
    <property type="match status" value="1"/>
</dbReference>
<dbReference type="Pfam" id="PF03479">
    <property type="entry name" value="PCC"/>
    <property type="match status" value="1"/>
</dbReference>
<dbReference type="PIRSF" id="PIRSF016021">
    <property type="entry name" value="ESCAROLA"/>
    <property type="match status" value="1"/>
</dbReference>
<dbReference type="SUPFAM" id="SSF117856">
    <property type="entry name" value="AF0104/ALDC/Ptd012-like"/>
    <property type="match status" value="1"/>
</dbReference>
<dbReference type="PROSITE" id="PS51742">
    <property type="entry name" value="PPC"/>
    <property type="match status" value="1"/>
</dbReference>
<organism>
    <name type="scientific">Arabidopsis thaliana</name>
    <name type="common">Mouse-ear cress</name>
    <dbReference type="NCBI Taxonomy" id="3702"/>
    <lineage>
        <taxon>Eukaryota</taxon>
        <taxon>Viridiplantae</taxon>
        <taxon>Streptophyta</taxon>
        <taxon>Embryophyta</taxon>
        <taxon>Tracheophyta</taxon>
        <taxon>Spermatophyta</taxon>
        <taxon>Magnoliopsida</taxon>
        <taxon>eudicotyledons</taxon>
        <taxon>Gunneridae</taxon>
        <taxon>Pentapetalae</taxon>
        <taxon>rosids</taxon>
        <taxon>malvids</taxon>
        <taxon>Brassicales</taxon>
        <taxon>Brassicaceae</taxon>
        <taxon>Camelineae</taxon>
        <taxon>Arabidopsis</taxon>
    </lineage>
</organism>
<reference key="1">
    <citation type="journal article" date="1999" name="Nature">
        <title>Sequence and analysis of chromosome 4 of the plant Arabidopsis thaliana.</title>
        <authorList>
            <person name="Mayer K.F.X."/>
            <person name="Schueller C."/>
            <person name="Wambutt R."/>
            <person name="Murphy G."/>
            <person name="Volckaert G."/>
            <person name="Pohl T."/>
            <person name="Duesterhoeft A."/>
            <person name="Stiekema W."/>
            <person name="Entian K.-D."/>
            <person name="Terryn N."/>
            <person name="Harris B."/>
            <person name="Ansorge W."/>
            <person name="Brandt P."/>
            <person name="Grivell L.A."/>
            <person name="Rieger M."/>
            <person name="Weichselgartner M."/>
            <person name="de Simone V."/>
            <person name="Obermaier B."/>
            <person name="Mache R."/>
            <person name="Mueller M."/>
            <person name="Kreis M."/>
            <person name="Delseny M."/>
            <person name="Puigdomenech P."/>
            <person name="Watson M."/>
            <person name="Schmidtheini T."/>
            <person name="Reichert B."/>
            <person name="Portetelle D."/>
            <person name="Perez-Alonso M."/>
            <person name="Boutry M."/>
            <person name="Bancroft I."/>
            <person name="Vos P."/>
            <person name="Hoheisel J."/>
            <person name="Zimmermann W."/>
            <person name="Wedler H."/>
            <person name="Ridley P."/>
            <person name="Langham S.-A."/>
            <person name="McCullagh B."/>
            <person name="Bilham L."/>
            <person name="Robben J."/>
            <person name="van der Schueren J."/>
            <person name="Grymonprez B."/>
            <person name="Chuang Y.-J."/>
            <person name="Vandenbussche F."/>
            <person name="Braeken M."/>
            <person name="Weltjens I."/>
            <person name="Voet M."/>
            <person name="Bastiaens I."/>
            <person name="Aert R."/>
            <person name="Defoor E."/>
            <person name="Weitzenegger T."/>
            <person name="Bothe G."/>
            <person name="Ramsperger U."/>
            <person name="Hilbert H."/>
            <person name="Braun M."/>
            <person name="Holzer E."/>
            <person name="Brandt A."/>
            <person name="Peters S."/>
            <person name="van Staveren M."/>
            <person name="Dirkse W."/>
            <person name="Mooijman P."/>
            <person name="Klein Lankhorst R."/>
            <person name="Rose M."/>
            <person name="Hauf J."/>
            <person name="Koetter P."/>
            <person name="Berneiser S."/>
            <person name="Hempel S."/>
            <person name="Feldpausch M."/>
            <person name="Lamberth S."/>
            <person name="Van den Daele H."/>
            <person name="De Keyser A."/>
            <person name="Buysshaert C."/>
            <person name="Gielen J."/>
            <person name="Villarroel R."/>
            <person name="De Clercq R."/>
            <person name="van Montagu M."/>
            <person name="Rogers J."/>
            <person name="Cronin A."/>
            <person name="Quail M.A."/>
            <person name="Bray-Allen S."/>
            <person name="Clark L."/>
            <person name="Doggett J."/>
            <person name="Hall S."/>
            <person name="Kay M."/>
            <person name="Lennard N."/>
            <person name="McLay K."/>
            <person name="Mayes R."/>
            <person name="Pettett A."/>
            <person name="Rajandream M.A."/>
            <person name="Lyne M."/>
            <person name="Benes V."/>
            <person name="Rechmann S."/>
            <person name="Borkova D."/>
            <person name="Bloecker H."/>
            <person name="Scharfe M."/>
            <person name="Grimm M."/>
            <person name="Loehnert T.-H."/>
            <person name="Dose S."/>
            <person name="de Haan M."/>
            <person name="Maarse A.C."/>
            <person name="Schaefer M."/>
            <person name="Mueller-Auer S."/>
            <person name="Gabel C."/>
            <person name="Fuchs M."/>
            <person name="Fartmann B."/>
            <person name="Granderath K."/>
            <person name="Dauner D."/>
            <person name="Herzl A."/>
            <person name="Neumann S."/>
            <person name="Argiriou A."/>
            <person name="Vitale D."/>
            <person name="Liguori R."/>
            <person name="Piravandi E."/>
            <person name="Massenet O."/>
            <person name="Quigley F."/>
            <person name="Clabauld G."/>
            <person name="Muendlein A."/>
            <person name="Felber R."/>
            <person name="Schnabl S."/>
            <person name="Hiller R."/>
            <person name="Schmidt W."/>
            <person name="Lecharny A."/>
            <person name="Aubourg S."/>
            <person name="Chefdor F."/>
            <person name="Cooke R."/>
            <person name="Berger C."/>
            <person name="Monfort A."/>
            <person name="Casacuberta E."/>
            <person name="Gibbons T."/>
            <person name="Weber N."/>
            <person name="Vandenbol M."/>
            <person name="Bargues M."/>
            <person name="Terol J."/>
            <person name="Torres A."/>
            <person name="Perez-Perez A."/>
            <person name="Purnelle B."/>
            <person name="Bent E."/>
            <person name="Johnson S."/>
            <person name="Tacon D."/>
            <person name="Jesse T."/>
            <person name="Heijnen L."/>
            <person name="Schwarz S."/>
            <person name="Scholler P."/>
            <person name="Heber S."/>
            <person name="Francs P."/>
            <person name="Bielke C."/>
            <person name="Frishman D."/>
            <person name="Haase D."/>
            <person name="Lemcke K."/>
            <person name="Mewes H.-W."/>
            <person name="Stocker S."/>
            <person name="Zaccaria P."/>
            <person name="Bevan M."/>
            <person name="Wilson R.K."/>
            <person name="de la Bastide M."/>
            <person name="Habermann K."/>
            <person name="Parnell L."/>
            <person name="Dedhia N."/>
            <person name="Gnoj L."/>
            <person name="Schutz K."/>
            <person name="Huang E."/>
            <person name="Spiegel L."/>
            <person name="Sekhon M."/>
            <person name="Murray J."/>
            <person name="Sheet P."/>
            <person name="Cordes M."/>
            <person name="Abu-Threideh J."/>
            <person name="Stoneking T."/>
            <person name="Kalicki J."/>
            <person name="Graves T."/>
            <person name="Harmon G."/>
            <person name="Edwards J."/>
            <person name="Latreille P."/>
            <person name="Courtney L."/>
            <person name="Cloud J."/>
            <person name="Abbott A."/>
            <person name="Scott K."/>
            <person name="Johnson D."/>
            <person name="Minx P."/>
            <person name="Bentley D."/>
            <person name="Fulton B."/>
            <person name="Miller N."/>
            <person name="Greco T."/>
            <person name="Kemp K."/>
            <person name="Kramer J."/>
            <person name="Fulton L."/>
            <person name="Mardis E."/>
            <person name="Dante M."/>
            <person name="Pepin K."/>
            <person name="Hillier L.W."/>
            <person name="Nelson J."/>
            <person name="Spieth J."/>
            <person name="Ryan E."/>
            <person name="Andrews S."/>
            <person name="Geisel C."/>
            <person name="Layman D."/>
            <person name="Du H."/>
            <person name="Ali J."/>
            <person name="Berghoff A."/>
            <person name="Jones K."/>
            <person name="Drone K."/>
            <person name="Cotton M."/>
            <person name="Joshu C."/>
            <person name="Antonoiu B."/>
            <person name="Zidanic M."/>
            <person name="Strong C."/>
            <person name="Sun H."/>
            <person name="Lamar B."/>
            <person name="Yordan C."/>
            <person name="Ma P."/>
            <person name="Zhong J."/>
            <person name="Preston R."/>
            <person name="Vil D."/>
            <person name="Shekher M."/>
            <person name="Matero A."/>
            <person name="Shah R."/>
            <person name="Swaby I.K."/>
            <person name="O'Shaughnessy A."/>
            <person name="Rodriguez M."/>
            <person name="Hoffman J."/>
            <person name="Till S."/>
            <person name="Granat S."/>
            <person name="Shohdy N."/>
            <person name="Hasegawa A."/>
            <person name="Hameed A."/>
            <person name="Lodhi M."/>
            <person name="Johnson A."/>
            <person name="Chen E."/>
            <person name="Marra M.A."/>
            <person name="Martienssen R."/>
            <person name="McCombie W.R."/>
        </authorList>
    </citation>
    <scope>NUCLEOTIDE SEQUENCE [LARGE SCALE GENOMIC DNA]</scope>
    <source>
        <strain>cv. Columbia</strain>
    </source>
</reference>
<reference key="2">
    <citation type="journal article" date="2017" name="Plant J.">
        <title>Araport11: a complete reannotation of the Arabidopsis thaliana reference genome.</title>
        <authorList>
            <person name="Cheng C.Y."/>
            <person name="Krishnakumar V."/>
            <person name="Chan A.P."/>
            <person name="Thibaud-Nissen F."/>
            <person name="Schobel S."/>
            <person name="Town C.D."/>
        </authorList>
    </citation>
    <scope>GENOME REANNOTATION</scope>
    <source>
        <strain>cv. Columbia</strain>
    </source>
</reference>
<reference key="3">
    <citation type="submission" date="2006-07" db="EMBL/GenBank/DDBJ databases">
        <title>Large-scale analysis of RIKEN Arabidopsis full-length (RAFL) cDNAs.</title>
        <authorList>
            <person name="Totoki Y."/>
            <person name="Seki M."/>
            <person name="Ishida J."/>
            <person name="Nakajima M."/>
            <person name="Enju A."/>
            <person name="Kamiya A."/>
            <person name="Narusaka M."/>
            <person name="Shin-i T."/>
            <person name="Nakagawa M."/>
            <person name="Sakamoto N."/>
            <person name="Oishi K."/>
            <person name="Kohara Y."/>
            <person name="Kobayashi M."/>
            <person name="Toyoda A."/>
            <person name="Sakaki Y."/>
            <person name="Sakurai T."/>
            <person name="Iida K."/>
            <person name="Akiyama K."/>
            <person name="Satou M."/>
            <person name="Toyoda T."/>
            <person name="Konagaya A."/>
            <person name="Carninci P."/>
            <person name="Kawai J."/>
            <person name="Hayashizaki Y."/>
            <person name="Shinozaki K."/>
        </authorList>
    </citation>
    <scope>NUCLEOTIDE SEQUENCE [LARGE SCALE MRNA]</scope>
    <source>
        <strain>cv. Columbia</strain>
    </source>
</reference>
<reference key="4">
    <citation type="submission" date="2009-03" db="EMBL/GenBank/DDBJ databases">
        <title>ORF cloning and analysis of Arabidopsis transcription factor genes.</title>
        <authorList>
            <person name="Fujita M."/>
            <person name="Mizukado S."/>
            <person name="Seki M."/>
            <person name="Shinozaki K."/>
            <person name="Mitsuda N."/>
            <person name="Takiguchi Y."/>
            <person name="Takagi M."/>
        </authorList>
    </citation>
    <scope>NUCLEOTIDE SEQUENCE [LARGE SCALE MRNA]</scope>
</reference>
<reference key="5">
    <citation type="journal article" date="2004" name="Plant Mol. Biol.">
        <title>Identification of a novel plant MAR DNA binding protein localized on chromosomal surfaces.</title>
        <authorList>
            <person name="Fujimoto S."/>
            <person name="Matsunaga S."/>
            <person name="Yonemura M."/>
            <person name="Uchiyama S."/>
            <person name="Azuma T."/>
            <person name="Fukui K."/>
        </authorList>
    </citation>
    <scope>IDENTIFICATION</scope>
    <scope>GENE FAMILY</scope>
    <scope>NOMENCLATURE</scope>
    <source>
        <strain>cv. Columbia</strain>
    </source>
</reference>
<reference key="6">
    <citation type="journal article" date="2013" name="Proc. Natl. Acad. Sci. U.S.A.">
        <title>Arabidopsis thaliana AHL family modulates hypocotyl growth redundantly by interacting with each other via the PPC/DUF296 domain.</title>
        <authorList>
            <person name="Zhao J."/>
            <person name="Favero D.S."/>
            <person name="Peng H."/>
            <person name="Neff M.M."/>
        </authorList>
    </citation>
    <scope>GENE FAMILY</scope>
    <scope>DOMAIN PPC</scope>
</reference>
<evidence type="ECO:0000250" key="1">
    <source>
        <dbReference type="UniProtKB" id="Q8VYJ2"/>
    </source>
</evidence>
<evidence type="ECO:0000255" key="2">
    <source>
        <dbReference type="PROSITE-ProRule" id="PRU01078"/>
    </source>
</evidence>
<evidence type="ECO:0000256" key="3">
    <source>
        <dbReference type="SAM" id="MobiDB-lite"/>
    </source>
</evidence>
<evidence type="ECO:0000269" key="4">
    <source>
    </source>
</evidence>
<evidence type="ECO:0000303" key="5">
    <source>
    </source>
</evidence>
<evidence type="ECO:0000305" key="6"/>
<evidence type="ECO:0000312" key="7">
    <source>
        <dbReference type="Araport" id="AT4G22810"/>
    </source>
</evidence>
<evidence type="ECO:0000312" key="8">
    <source>
        <dbReference type="EMBL" id="CAA16566.1"/>
    </source>
</evidence>
<evidence type="ECO:0000312" key="9">
    <source>
        <dbReference type="EMBL" id="FAA00295.1"/>
    </source>
</evidence>
<gene>
    <name evidence="5" type="primary">AHL24</name>
    <name evidence="7" type="ordered locus">At4g22810</name>
    <name evidence="8" type="ORF">T12H17.200</name>
</gene>
<keyword id="KW-0238">DNA-binding</keyword>
<keyword id="KW-0539">Nucleus</keyword>
<keyword id="KW-1185">Reference proteome</keyword>
<keyword id="KW-0804">Transcription</keyword>
<keyword id="KW-0805">Transcription regulation</keyword>
<protein>
    <recommendedName>
        <fullName evidence="9">AT-hook motif nuclear-localized protein 24</fullName>
    </recommendedName>
</protein>
<feature type="chain" id="PRO_0000432042" description="AT-hook motif nuclear-localized protein 24">
    <location>
        <begin position="1"/>
        <end position="324"/>
    </location>
</feature>
<feature type="domain" description="PPC" evidence="2">
    <location>
        <begin position="129"/>
        <end position="268"/>
    </location>
</feature>
<feature type="DNA-binding region" description="A.T hook" evidence="6">
    <location>
        <begin position="105"/>
        <end position="117"/>
    </location>
</feature>
<feature type="region of interest" description="Disordered" evidence="3">
    <location>
        <begin position="1"/>
        <end position="122"/>
    </location>
</feature>
<feature type="region of interest" description="Disordered" evidence="3">
    <location>
        <begin position="262"/>
        <end position="324"/>
    </location>
</feature>
<feature type="compositionally biased region" description="Polar residues" evidence="3">
    <location>
        <begin position="1"/>
        <end position="12"/>
    </location>
</feature>
<feature type="compositionally biased region" description="Low complexity" evidence="3">
    <location>
        <begin position="24"/>
        <end position="33"/>
    </location>
</feature>
<feature type="compositionally biased region" description="Polar residues" evidence="3">
    <location>
        <begin position="69"/>
        <end position="79"/>
    </location>
</feature>
<feature type="compositionally biased region" description="Gly residues" evidence="3">
    <location>
        <begin position="88"/>
        <end position="99"/>
    </location>
</feature>
<feature type="compositionally biased region" description="Low complexity" evidence="3">
    <location>
        <begin position="280"/>
        <end position="297"/>
    </location>
</feature>
<feature type="compositionally biased region" description="Polar residues" evidence="3">
    <location>
        <begin position="304"/>
        <end position="318"/>
    </location>
</feature>
<feature type="sequence conflict" description="In Ref. 3; BAF02122." evidence="6" ref="3">
    <original>D</original>
    <variation>G</variation>
    <location>
        <position position="83"/>
    </location>
</feature>
<feature type="sequence conflict" description="In Ref. 3; BAF02122." evidence="6" ref="3">
    <original>D</original>
    <variation>G</variation>
    <location>
        <position position="260"/>
    </location>
</feature>
<accession>O49662</accession>
<accession>Q0WL85</accession>
<comment type="function">
    <text evidence="1">Transcription factor that specifically binds AT-rich DNA sequences related to the nuclear matrix attachment regions (MARs).</text>
</comment>
<comment type="subcellular location">
    <subcellularLocation>
        <location evidence="1">Nucleus</location>
    </subcellularLocation>
</comment>
<comment type="domain">
    <text evidence="4">The PPC domain mediates interactions between AHL proteins.</text>
</comment>
<sequence length="324" mass="34339">MDPVQSHGSQSSLPPPFHARDFQLHLQQQQQEFFLHHHQQQRNQTDGDQQGGSGGNRQIKMDREETSDNIDNIANNSGSEGKDIDIHGGSGEGGGGSGGDHQMTRRPRGRPAGSKNKPKPPIIITRDSANALRTHVMEIGDGCDLVESVATFARRRQRGVCVMSGTGNVTNVTIRQPGSHPSPGSVVSLHGRFEILSLSGSFLPPPAPPTATGLSVYLAGGQGQVVGGSVVGPLLCAGPVVVMAASFSNAAYERLPLEEDEMQTPVHGGGGGGSLESPPMMGQQLQHQQQAMSGHQGLPPNLLGSVQLQQQHDQSYWSTGRPPY</sequence>
<proteinExistence type="evidence at transcript level"/>
<name>AHL24_ARATH</name>